<keyword id="KW-1185">Reference proteome</keyword>
<accession>Q54AU8</accession>
<dbReference type="EMBL" id="AAFI02000232">
    <property type="protein sequence ID" value="EAL60385.1"/>
    <property type="molecule type" value="Genomic_DNA"/>
</dbReference>
<dbReference type="RefSeq" id="XP_628798.1">
    <property type="nucleotide sequence ID" value="XM_628796.1"/>
</dbReference>
<dbReference type="STRING" id="44689.Q54AU8"/>
<dbReference type="PaxDb" id="44689-DDB0215091"/>
<dbReference type="EnsemblProtists" id="EAL60385">
    <property type="protein sequence ID" value="EAL60385"/>
    <property type="gene ID" value="DDB_G0294196"/>
</dbReference>
<dbReference type="GeneID" id="3385462"/>
<dbReference type="KEGG" id="ddi:DDB_G0294196"/>
<dbReference type="dictyBase" id="DDB_G0294196"/>
<dbReference type="VEuPathDB" id="AmoebaDB:DDB_G0294196"/>
<dbReference type="HOGENOM" id="CLU_624739_0_0_1"/>
<dbReference type="InParanoid" id="Q54AU8"/>
<dbReference type="OMA" id="FNTRSIN"/>
<dbReference type="PRO" id="PR:Q54AU8"/>
<dbReference type="Proteomes" id="UP000002195">
    <property type="component" value="Unassembled WGS sequence"/>
</dbReference>
<dbReference type="InterPro" id="IPR039344">
    <property type="entry name" value="MBLAC1"/>
</dbReference>
<dbReference type="PANTHER" id="PTHR23200">
    <property type="entry name" value="METALLO-BETA-LACTAMASE DOMAIN-CONTAINING PROTEIN 1"/>
    <property type="match status" value="1"/>
</dbReference>
<dbReference type="PANTHER" id="PTHR23200:SF48">
    <property type="entry name" value="METALLO-BETA-LACTAMASE DOMAIN-CONTAINING PROTEIN 1"/>
    <property type="match status" value="1"/>
</dbReference>
<name>Y5091_DICDI</name>
<sequence>MVLKVVYYKKREKNQTLDDITNNESINNTNEYDLSDDSDLSYIIESYDDQNEEETEETNDDAVKLLKDIRKSFTNTEELKEDEFKDNNIVFSFQNYLFGVNKEHNIFNLQNRITLDDKILDYPTEPYSNTNSNFFNTRSINNNSSTFNNDDSNNSIIRESRNFSNQMNISEISSDKQIDSNINTLIEMQRDSTKFSAEITKTISKLNNTLNTINQNQVVLHKTIESHFIKITESLNYLIQPQQQQQQQQQQQQQQQQQQQQQQQQQQQQQQQQQPQHNNNNTQVQPPPPSQQLPPPPKPQPQLPKPQPQKPQPQLPKPPQQPKPPQEPQPDLTSLLKPKIKKQPPKEQQQEQQQQPPQEQQQQQPQEQQQQQQQQQQQQQQQQQQQQQQQQQPQEQQQQQQEPQHKTTTTTTQNNYHNNNNNNTTTPTTRTRFTTTNLH</sequence>
<proteinExistence type="predicted"/>
<gene>
    <name type="ORF">DDB_G0294196</name>
</gene>
<evidence type="ECO:0000256" key="1">
    <source>
        <dbReference type="SAM" id="MobiDB-lite"/>
    </source>
</evidence>
<organism>
    <name type="scientific">Dictyostelium discoideum</name>
    <name type="common">Social amoeba</name>
    <dbReference type="NCBI Taxonomy" id="44689"/>
    <lineage>
        <taxon>Eukaryota</taxon>
        <taxon>Amoebozoa</taxon>
        <taxon>Evosea</taxon>
        <taxon>Eumycetozoa</taxon>
        <taxon>Dictyostelia</taxon>
        <taxon>Dictyosteliales</taxon>
        <taxon>Dictyosteliaceae</taxon>
        <taxon>Dictyostelium</taxon>
    </lineage>
</organism>
<feature type="chain" id="PRO_0000343920" description="Putative uncharacterized protein DDB_G0294196">
    <location>
        <begin position="1"/>
        <end position="439"/>
    </location>
</feature>
<feature type="region of interest" description="Disordered" evidence="1">
    <location>
        <begin position="268"/>
        <end position="439"/>
    </location>
</feature>
<feature type="compositionally biased region" description="Low complexity" evidence="1">
    <location>
        <begin position="268"/>
        <end position="284"/>
    </location>
</feature>
<feature type="compositionally biased region" description="Pro residues" evidence="1">
    <location>
        <begin position="285"/>
        <end position="328"/>
    </location>
</feature>
<feature type="compositionally biased region" description="Low complexity" evidence="1">
    <location>
        <begin position="350"/>
        <end position="439"/>
    </location>
</feature>
<protein>
    <recommendedName>
        <fullName>Putative uncharacterized protein DDB_G0294196</fullName>
    </recommendedName>
</protein>
<reference key="1">
    <citation type="journal article" date="2005" name="Nature">
        <title>The genome of the social amoeba Dictyostelium discoideum.</title>
        <authorList>
            <person name="Eichinger L."/>
            <person name="Pachebat J.A."/>
            <person name="Gloeckner G."/>
            <person name="Rajandream M.A."/>
            <person name="Sucgang R."/>
            <person name="Berriman M."/>
            <person name="Song J."/>
            <person name="Olsen R."/>
            <person name="Szafranski K."/>
            <person name="Xu Q."/>
            <person name="Tunggal B."/>
            <person name="Kummerfeld S."/>
            <person name="Madera M."/>
            <person name="Konfortov B.A."/>
            <person name="Rivero F."/>
            <person name="Bankier A.T."/>
            <person name="Lehmann R."/>
            <person name="Hamlin N."/>
            <person name="Davies R."/>
            <person name="Gaudet P."/>
            <person name="Fey P."/>
            <person name="Pilcher K."/>
            <person name="Chen G."/>
            <person name="Saunders D."/>
            <person name="Sodergren E.J."/>
            <person name="Davis P."/>
            <person name="Kerhornou A."/>
            <person name="Nie X."/>
            <person name="Hall N."/>
            <person name="Anjard C."/>
            <person name="Hemphill L."/>
            <person name="Bason N."/>
            <person name="Farbrother P."/>
            <person name="Desany B."/>
            <person name="Just E."/>
            <person name="Morio T."/>
            <person name="Rost R."/>
            <person name="Churcher C.M."/>
            <person name="Cooper J."/>
            <person name="Haydock S."/>
            <person name="van Driessche N."/>
            <person name="Cronin A."/>
            <person name="Goodhead I."/>
            <person name="Muzny D.M."/>
            <person name="Mourier T."/>
            <person name="Pain A."/>
            <person name="Lu M."/>
            <person name="Harper D."/>
            <person name="Lindsay R."/>
            <person name="Hauser H."/>
            <person name="James K.D."/>
            <person name="Quiles M."/>
            <person name="Madan Babu M."/>
            <person name="Saito T."/>
            <person name="Buchrieser C."/>
            <person name="Wardroper A."/>
            <person name="Felder M."/>
            <person name="Thangavelu M."/>
            <person name="Johnson D."/>
            <person name="Knights A."/>
            <person name="Loulseged H."/>
            <person name="Mungall K.L."/>
            <person name="Oliver K."/>
            <person name="Price C."/>
            <person name="Quail M.A."/>
            <person name="Urushihara H."/>
            <person name="Hernandez J."/>
            <person name="Rabbinowitsch E."/>
            <person name="Steffen D."/>
            <person name="Sanders M."/>
            <person name="Ma J."/>
            <person name="Kohara Y."/>
            <person name="Sharp S."/>
            <person name="Simmonds M.N."/>
            <person name="Spiegler S."/>
            <person name="Tivey A."/>
            <person name="Sugano S."/>
            <person name="White B."/>
            <person name="Walker D."/>
            <person name="Woodward J.R."/>
            <person name="Winckler T."/>
            <person name="Tanaka Y."/>
            <person name="Shaulsky G."/>
            <person name="Schleicher M."/>
            <person name="Weinstock G.M."/>
            <person name="Rosenthal A."/>
            <person name="Cox E.C."/>
            <person name="Chisholm R.L."/>
            <person name="Gibbs R.A."/>
            <person name="Loomis W.F."/>
            <person name="Platzer M."/>
            <person name="Kay R.R."/>
            <person name="Williams J.G."/>
            <person name="Dear P.H."/>
            <person name="Noegel A.A."/>
            <person name="Barrell B.G."/>
            <person name="Kuspa A."/>
        </authorList>
    </citation>
    <scope>NUCLEOTIDE SEQUENCE [LARGE SCALE GENOMIC DNA]</scope>
    <source>
        <strain>AX4</strain>
    </source>
</reference>